<organism>
    <name type="scientific">Homo sapiens</name>
    <name type="common">Human</name>
    <dbReference type="NCBI Taxonomy" id="9606"/>
    <lineage>
        <taxon>Eukaryota</taxon>
        <taxon>Metazoa</taxon>
        <taxon>Chordata</taxon>
        <taxon>Craniata</taxon>
        <taxon>Vertebrata</taxon>
        <taxon>Euteleostomi</taxon>
        <taxon>Mammalia</taxon>
        <taxon>Eutheria</taxon>
        <taxon>Euarchontoglires</taxon>
        <taxon>Primates</taxon>
        <taxon>Haplorrhini</taxon>
        <taxon>Catarrhini</taxon>
        <taxon>Hominidae</taxon>
        <taxon>Homo</taxon>
    </lineage>
</organism>
<dbReference type="EMBL" id="AF322875">
    <property type="protein sequence ID" value="AAK26295.1"/>
    <property type="molecule type" value="mRNA"/>
</dbReference>
<dbReference type="EMBL" id="AY244805">
    <property type="protein sequence ID" value="AAP75762.1"/>
    <property type="molecule type" value="mRNA"/>
</dbReference>
<dbReference type="EMBL" id="AY255672">
    <property type="protein sequence ID" value="AAP81221.1"/>
    <property type="molecule type" value="mRNA"/>
</dbReference>
<dbReference type="EMBL" id="AF228713">
    <property type="protein sequence ID" value="AAF67133.1"/>
    <property type="status" value="ALT_INIT"/>
    <property type="molecule type" value="mRNA"/>
</dbReference>
<dbReference type="EMBL" id="AL499604">
    <property type="status" value="NOT_ANNOTATED_CDS"/>
    <property type="molecule type" value="Genomic_DNA"/>
</dbReference>
<dbReference type="EMBL" id="BC048324">
    <property type="protein sequence ID" value="AAH48324.1"/>
    <property type="molecule type" value="mRNA"/>
</dbReference>
<dbReference type="EMBL" id="AF130060">
    <property type="protein sequence ID" value="AAG35488.1"/>
    <property type="status" value="ALT_INIT"/>
    <property type="molecule type" value="mRNA"/>
</dbReference>
<dbReference type="EMBL" id="AF116617">
    <property type="protein sequence ID" value="AAF71041.1"/>
    <property type="status" value="ALT_INIT"/>
    <property type="molecule type" value="mRNA"/>
</dbReference>
<dbReference type="CCDS" id="CCDS6731.1"/>
<dbReference type="RefSeq" id="NP_060907.2">
    <property type="nucleotide sequence ID" value="NM_018437.4"/>
</dbReference>
<dbReference type="RefSeq" id="NP_932095.1">
    <property type="nucleotide sequence ID" value="NM_197978.3"/>
</dbReference>
<dbReference type="RefSeq" id="XP_005252143.1">
    <property type="nucleotide sequence ID" value="XM_005252086.1"/>
</dbReference>
<dbReference type="RefSeq" id="XP_011517147.1">
    <property type="nucleotide sequence ID" value="XM_011518845.2"/>
</dbReference>
<dbReference type="RefSeq" id="XP_011517148.1">
    <property type="nucleotide sequence ID" value="XM_011518846.2"/>
</dbReference>
<dbReference type="RefSeq" id="XP_054219211.1">
    <property type="nucleotide sequence ID" value="XM_054363236.1"/>
</dbReference>
<dbReference type="RefSeq" id="XP_054219212.1">
    <property type="nucleotide sequence ID" value="XM_054363237.1"/>
</dbReference>
<dbReference type="RefSeq" id="XP_054219213.1">
    <property type="nucleotide sequence ID" value="XM_054363238.1"/>
</dbReference>
<dbReference type="BioGRID" id="120641">
    <property type="interactions" value="42"/>
</dbReference>
<dbReference type="FunCoup" id="Q9BXL5">
    <property type="interactions" value="223"/>
</dbReference>
<dbReference type="IntAct" id="Q9BXL5">
    <property type="interactions" value="34"/>
</dbReference>
<dbReference type="MINT" id="Q9BXL5"/>
<dbReference type="STRING" id="9606.ENSP00000259456"/>
<dbReference type="GlyGen" id="Q9BXL5">
    <property type="glycosylation" value="1 site, 1 O-linked glycan (1 site)"/>
</dbReference>
<dbReference type="iPTMnet" id="Q9BXL5"/>
<dbReference type="PhosphoSitePlus" id="Q9BXL5"/>
<dbReference type="BioMuta" id="HEMGN"/>
<dbReference type="DMDM" id="74752432"/>
<dbReference type="MassIVE" id="Q9BXL5"/>
<dbReference type="PaxDb" id="9606-ENSP00000480020"/>
<dbReference type="PeptideAtlas" id="Q9BXL5"/>
<dbReference type="ProteomicsDB" id="79448"/>
<dbReference type="Pumba" id="Q9BXL5"/>
<dbReference type="Antibodypedia" id="14425">
    <property type="antibodies" value="204 antibodies from 24 providers"/>
</dbReference>
<dbReference type="DNASU" id="55363"/>
<dbReference type="Ensembl" id="ENST00000259456.7">
    <property type="protein sequence ID" value="ENSP00000259456.2"/>
    <property type="gene ID" value="ENSG00000136929.13"/>
</dbReference>
<dbReference type="Ensembl" id="ENST00000616898.2">
    <property type="protein sequence ID" value="ENSP00000480020.1"/>
    <property type="gene ID" value="ENSG00000136929.13"/>
</dbReference>
<dbReference type="GeneID" id="55363"/>
<dbReference type="KEGG" id="hsa:55363"/>
<dbReference type="MANE-Select" id="ENST00000616898.2">
    <property type="protein sequence ID" value="ENSP00000480020.1"/>
    <property type="RefSeq nucleotide sequence ID" value="NM_197978.3"/>
    <property type="RefSeq protein sequence ID" value="NP_932095.1"/>
</dbReference>
<dbReference type="UCSC" id="uc004axy.4">
    <property type="organism name" value="human"/>
</dbReference>
<dbReference type="AGR" id="HGNC:17509"/>
<dbReference type="CTD" id="55363"/>
<dbReference type="DisGeNET" id="55363"/>
<dbReference type="GeneCards" id="HEMGN"/>
<dbReference type="HGNC" id="HGNC:17509">
    <property type="gene designation" value="HEMGN"/>
</dbReference>
<dbReference type="HPA" id="ENSG00000136929">
    <property type="expression patterns" value="Tissue enriched (bone)"/>
</dbReference>
<dbReference type="MIM" id="610715">
    <property type="type" value="gene"/>
</dbReference>
<dbReference type="neXtProt" id="NX_Q9BXL5"/>
<dbReference type="OpenTargets" id="ENSG00000136929"/>
<dbReference type="PharmGKB" id="PA38458"/>
<dbReference type="VEuPathDB" id="HostDB:ENSG00000136929"/>
<dbReference type="eggNOG" id="ENOG502SBFR">
    <property type="taxonomic scope" value="Eukaryota"/>
</dbReference>
<dbReference type="GeneTree" id="ENSGT00390000004522"/>
<dbReference type="HOGENOM" id="CLU_569802_0_0_1"/>
<dbReference type="InParanoid" id="Q9BXL5"/>
<dbReference type="OMA" id="MCQEIAV"/>
<dbReference type="OrthoDB" id="9950769at2759"/>
<dbReference type="PAN-GO" id="Q9BXL5">
    <property type="GO annotations" value="2 GO annotations based on evolutionary models"/>
</dbReference>
<dbReference type="PhylomeDB" id="Q9BXL5"/>
<dbReference type="TreeFam" id="TF338654"/>
<dbReference type="PathwayCommons" id="Q9BXL5"/>
<dbReference type="SignaLink" id="Q9BXL5"/>
<dbReference type="BioGRID-ORCS" id="55363">
    <property type="hits" value="20 hits in 1149 CRISPR screens"/>
</dbReference>
<dbReference type="ChiTaRS" id="HEMGN">
    <property type="organism name" value="human"/>
</dbReference>
<dbReference type="GeneWiki" id="HEMGN"/>
<dbReference type="GenomeRNAi" id="55363"/>
<dbReference type="Pharos" id="Q9BXL5">
    <property type="development level" value="Tbio"/>
</dbReference>
<dbReference type="PRO" id="PR:Q9BXL5"/>
<dbReference type="Proteomes" id="UP000005640">
    <property type="component" value="Chromosome 9"/>
</dbReference>
<dbReference type="RNAct" id="Q9BXL5">
    <property type="molecule type" value="protein"/>
</dbReference>
<dbReference type="Bgee" id="ENSG00000136929">
    <property type="expression patterns" value="Expressed in trabecular bone tissue and 95 other cell types or tissues"/>
</dbReference>
<dbReference type="ExpressionAtlas" id="Q9BXL5">
    <property type="expression patterns" value="baseline and differential"/>
</dbReference>
<dbReference type="GO" id="GO:0005654">
    <property type="term" value="C:nucleoplasm"/>
    <property type="evidence" value="ECO:0000314"/>
    <property type="project" value="HPA"/>
</dbReference>
<dbReference type="GO" id="GO:0030154">
    <property type="term" value="P:cell differentiation"/>
    <property type="evidence" value="ECO:0007669"/>
    <property type="project" value="UniProtKB-KW"/>
</dbReference>
<dbReference type="GO" id="GO:0045667">
    <property type="term" value="P:regulation of osteoblast differentiation"/>
    <property type="evidence" value="ECO:0000318"/>
    <property type="project" value="GO_Central"/>
</dbReference>
<dbReference type="InterPro" id="IPR033272">
    <property type="entry name" value="Hemogen"/>
</dbReference>
<dbReference type="PANTHER" id="PTHR15993">
    <property type="entry name" value="HEMOGEN"/>
    <property type="match status" value="1"/>
</dbReference>
<dbReference type="PANTHER" id="PTHR15993:SF6">
    <property type="entry name" value="HEMOGEN"/>
    <property type="match status" value="1"/>
</dbReference>
<feature type="chain" id="PRO_0000245361" description="Hemogen">
    <location>
        <begin position="1"/>
        <end position="484"/>
    </location>
</feature>
<feature type="region of interest" description="Disordered" evidence="3">
    <location>
        <begin position="1"/>
        <end position="32"/>
    </location>
</feature>
<feature type="region of interest" description="Necessary for nuclear localization">
    <location>
        <begin position="7"/>
        <end position="87"/>
    </location>
</feature>
<feature type="region of interest" description="Disordered" evidence="3">
    <location>
        <begin position="44"/>
        <end position="91"/>
    </location>
</feature>
<feature type="region of interest" description="Disordered" evidence="3">
    <location>
        <begin position="265"/>
        <end position="290"/>
    </location>
</feature>
<feature type="region of interest" description="Disordered" evidence="3">
    <location>
        <begin position="306"/>
        <end position="369"/>
    </location>
</feature>
<feature type="region of interest" description="Disordered" evidence="3">
    <location>
        <begin position="386"/>
        <end position="471"/>
    </location>
</feature>
<feature type="compositionally biased region" description="Basic and acidic residues" evidence="3">
    <location>
        <begin position="1"/>
        <end position="25"/>
    </location>
</feature>
<feature type="compositionally biased region" description="Basic residues" evidence="3">
    <location>
        <begin position="61"/>
        <end position="79"/>
    </location>
</feature>
<feature type="compositionally biased region" description="Basic and acidic residues" evidence="3">
    <location>
        <begin position="306"/>
        <end position="320"/>
    </location>
</feature>
<feature type="compositionally biased region" description="Basic and acidic residues" evidence="3">
    <location>
        <begin position="413"/>
        <end position="428"/>
    </location>
</feature>
<feature type="compositionally biased region" description="Basic and acidic residues" evidence="3">
    <location>
        <begin position="438"/>
        <end position="447"/>
    </location>
</feature>
<feature type="compositionally biased region" description="Basic and acidic residues" evidence="3">
    <location>
        <begin position="454"/>
        <end position="463"/>
    </location>
</feature>
<feature type="modified residue" description="Phosphoserine" evidence="11">
    <location>
        <position position="123"/>
    </location>
</feature>
<feature type="modified residue" description="Phosphoserine" evidence="2">
    <location>
        <position position="159"/>
    </location>
</feature>
<feature type="modified residue" description="Phosphoserine" evidence="11">
    <location>
        <position position="181"/>
    </location>
</feature>
<feature type="modified residue" description="Phosphoserine" evidence="11">
    <location>
        <position position="188"/>
    </location>
</feature>
<feature type="modified residue" description="Phosphoserine" evidence="11">
    <location>
        <position position="201"/>
    </location>
</feature>
<feature type="modified residue" description="Phosphothreonine" evidence="2">
    <location>
        <position position="246"/>
    </location>
</feature>
<feature type="modified residue" description="Phosphoserine" evidence="11">
    <location>
        <position position="349"/>
    </location>
</feature>
<feature type="modified residue" description="Phosphoserine" evidence="11">
    <location>
        <position position="353"/>
    </location>
</feature>
<feature type="modified residue" description="Phosphothreonine" evidence="11">
    <location>
        <position position="360"/>
    </location>
</feature>
<feature type="modified residue" description="Phosphoserine" evidence="11">
    <location>
        <position position="363"/>
    </location>
</feature>
<feature type="modified residue" description="Phosphoserine" evidence="1">
    <location>
        <position position="367"/>
    </location>
</feature>
<feature type="sequence conflict" description="In Ref. 2; AAP75762 and 3; AAF67133." evidence="10" ref="2 3">
    <original>R</original>
    <variation>K</variation>
    <location>
        <position position="78"/>
    </location>
</feature>
<feature type="sequence conflict" description="In Ref. 6; AAH48324." evidence="10" ref="6">
    <original>IV</original>
    <variation>M</variation>
    <location>
        <begin position="96"/>
        <end position="97"/>
    </location>
</feature>
<protein>
    <recommendedName>
        <fullName>Hemogen</fullName>
    </recommendedName>
    <alternativeName>
        <fullName>Erythroid differentiation-associated gene protein</fullName>
        <shortName>EDAG-1</shortName>
    </alternativeName>
    <alternativeName>
        <fullName>Hemopoietic gene protein</fullName>
    </alternativeName>
    <alternativeName>
        <fullName>Negative differentiation regulator protein</fullName>
    </alternativeName>
</protein>
<comment type="function">
    <text evidence="6 7 8">Regulates the proliferation and differentiation of hematopoietic cells. Overexpression block the TPA-induced megakaryocytic differentiation in the K562 cell model. May also prevent cell apoptosis through the activation of the nuclear factor-kappa B (NF-kB).</text>
</comment>
<comment type="interaction">
    <interactant intactId="EBI-3916399">
        <id>Q9BXL5</id>
    </interactant>
    <interactant intactId="EBI-908846">
        <id>Q13363</id>
        <label>CTBP1</label>
    </interactant>
    <organismsDiffer>false</organismsDiffer>
    <experiments>2</experiments>
</comment>
<comment type="interaction">
    <interactant intactId="EBI-3916399">
        <id>Q9BXL5</id>
    </interactant>
    <interactant intactId="EBI-78579">
        <id>P06748</id>
        <label>NPM1</label>
    </interactant>
    <organismsDiffer>false</organismsDiffer>
    <experiments>7</experiments>
</comment>
<comment type="subcellular location">
    <subcellularLocation>
        <location evidence="6">Nucleus</location>
    </subcellularLocation>
</comment>
<comment type="tissue specificity">
    <text evidence="4 5 6 7 8 9">Expressed in hematopoietic precursor cells, thyroid and spermatids (at protein level). Expressed in bone marrow, testis, thymus. Expressed in prostate cancer and ovarian cancer. Also expressed in thymus and thyroid tumors, non-Hodgkin lymphoma, various leukemia cell lines, peripheral blood mononuclear cells (PBMCs) and bone marrow mononuclear cells (BMMCs) of patients with leukemia.</text>
</comment>
<comment type="developmental stage">
    <text evidence="4 6">Expressed in fetal liver, kidney and brain.</text>
</comment>
<comment type="induction">
    <text evidence="6 7">Down-regulated during megakaryocytic differentiation of K562 cells by 12-O-tetradecanoylphorbol-13-acetate (TPA) (at protein level). Up-regulated in normal PBMCs by mitogens.</text>
</comment>
<comment type="sequence caution" evidence="10">
    <conflict type="erroneous initiation">
        <sequence resource="EMBL-CDS" id="AAF67133"/>
    </conflict>
    <text>Truncated N-terminus.</text>
</comment>
<comment type="sequence caution" evidence="10">
    <conflict type="erroneous initiation">
        <sequence resource="EMBL-CDS" id="AAF71041"/>
    </conflict>
    <text>Truncated N-terminus.</text>
</comment>
<comment type="sequence caution" evidence="10">
    <conflict type="erroneous initiation">
        <sequence resource="EMBL-CDS" id="AAG35488"/>
    </conflict>
    <text>Truncated N-terminus.</text>
</comment>
<gene>
    <name type="primary">HEMGN</name>
    <name type="synonym">EDAG</name>
    <name type="synonym">NDR</name>
    <name type="ORF">PRO1037</name>
    <name type="ORF">PRO1620</name>
</gene>
<keyword id="KW-0217">Developmental protein</keyword>
<keyword id="KW-0221">Differentiation</keyword>
<keyword id="KW-0539">Nucleus</keyword>
<keyword id="KW-0597">Phosphoprotein</keyword>
<keyword id="KW-1267">Proteomics identification</keyword>
<keyword id="KW-1185">Reference proteome</keyword>
<reference key="1">
    <citation type="journal article" date="2001" name="Mech. Dev.">
        <title>Hemogen is a novel nuclear factor specifically expressed in mouse hematopoietic development and its human homologue EDAG maps to chromosome 9q22, a region containing breakpoints of hematological neoplasms.</title>
        <authorList>
            <person name="Yang L.V."/>
            <person name="Nicholson R.H."/>
            <person name="Kaplan J."/>
            <person name="Galy A."/>
            <person name="Li L."/>
        </authorList>
    </citation>
    <scope>NUCLEOTIDE SEQUENCE [MRNA]</scope>
    <scope>TISSUE SPECIFICITY</scope>
    <scope>DEVELOPMENTAL STAGE</scope>
    <source>
        <tissue>Bone marrow</tissue>
    </source>
</reference>
<reference key="2">
    <citation type="journal article" date="2003" name="Dev. Dyn.">
        <title>Alternative promoters and polyadenylation regulate tissue-specific expression of Hemogen isoforms during hematopoiesis and spermatogenesis.</title>
        <authorList>
            <person name="Yang L.V."/>
            <person name="Heng H.H."/>
            <person name="Wan J."/>
            <person name="Southwood C.M."/>
            <person name="Gow A."/>
            <person name="Li L."/>
        </authorList>
    </citation>
    <scope>NUCLEOTIDE SEQUENCE [MRNA]</scope>
    <scope>TISSUE SPECIFICITY</scope>
</reference>
<reference key="3">
    <citation type="journal article" date="2004" name="Cell Death Differ.">
        <title>EDAG regulates the proliferation and differentiation of hematopoietic cells and resists cell apoptosis through the activation of nuclear factor-kappa B.</title>
        <authorList>
            <person name="Li C.Y."/>
            <person name="Zhan Y.Q."/>
            <person name="Xu C.W."/>
            <person name="Xu W.X."/>
            <person name="Wang S.Y."/>
            <person name="Lv J."/>
            <person name="Zhou Y."/>
            <person name="Yue P.B."/>
            <person name="Chen B."/>
            <person name="Yang X.M."/>
        </authorList>
    </citation>
    <scope>NUCLEOTIDE SEQUENCE [MRNA]</scope>
    <scope>FUNCTION</scope>
    <scope>INDUCTION</scope>
    <scope>TISSUE SPECIFICITY</scope>
</reference>
<reference key="4">
    <citation type="journal article" date="2004" name="J. Biomed. Sci.">
        <title>Down-regulation of human NDR gene in megakaryocytic differentiation of erythroleukemia K562 cells.</title>
        <authorList>
            <person name="Liu C.C."/>
            <person name="Chou Y.L."/>
            <person name="Ch'ang L.Y."/>
        </authorList>
    </citation>
    <scope>NUCLEOTIDE SEQUENCE [MRNA]</scope>
    <scope>FUNCTION</scope>
    <scope>TISSUE SPECIFICITY</scope>
    <scope>DEVELOPMENTAL STAGE</scope>
    <scope>SUBCELLULAR LOCATION</scope>
    <scope>INDUCTION</scope>
</reference>
<reference key="5">
    <citation type="journal article" date="2004" name="Nature">
        <title>DNA sequence and analysis of human chromosome 9.</title>
        <authorList>
            <person name="Humphray S.J."/>
            <person name="Oliver K."/>
            <person name="Hunt A.R."/>
            <person name="Plumb R.W."/>
            <person name="Loveland J.E."/>
            <person name="Howe K.L."/>
            <person name="Andrews T.D."/>
            <person name="Searle S."/>
            <person name="Hunt S.E."/>
            <person name="Scott C.E."/>
            <person name="Jones M.C."/>
            <person name="Ainscough R."/>
            <person name="Almeida J.P."/>
            <person name="Ambrose K.D."/>
            <person name="Ashwell R.I.S."/>
            <person name="Babbage A.K."/>
            <person name="Babbage S."/>
            <person name="Bagguley C.L."/>
            <person name="Bailey J."/>
            <person name="Banerjee R."/>
            <person name="Barker D.J."/>
            <person name="Barlow K.F."/>
            <person name="Bates K."/>
            <person name="Beasley H."/>
            <person name="Beasley O."/>
            <person name="Bird C.P."/>
            <person name="Bray-Allen S."/>
            <person name="Brown A.J."/>
            <person name="Brown J.Y."/>
            <person name="Burford D."/>
            <person name="Burrill W."/>
            <person name="Burton J."/>
            <person name="Carder C."/>
            <person name="Carter N.P."/>
            <person name="Chapman J.C."/>
            <person name="Chen Y."/>
            <person name="Clarke G."/>
            <person name="Clark S.Y."/>
            <person name="Clee C.M."/>
            <person name="Clegg S."/>
            <person name="Collier R.E."/>
            <person name="Corby N."/>
            <person name="Crosier M."/>
            <person name="Cummings A.T."/>
            <person name="Davies J."/>
            <person name="Dhami P."/>
            <person name="Dunn M."/>
            <person name="Dutta I."/>
            <person name="Dyer L.W."/>
            <person name="Earthrowl M.E."/>
            <person name="Faulkner L."/>
            <person name="Fleming C.J."/>
            <person name="Frankish A."/>
            <person name="Frankland J.A."/>
            <person name="French L."/>
            <person name="Fricker D.G."/>
            <person name="Garner P."/>
            <person name="Garnett J."/>
            <person name="Ghori J."/>
            <person name="Gilbert J.G.R."/>
            <person name="Glison C."/>
            <person name="Grafham D.V."/>
            <person name="Gribble S."/>
            <person name="Griffiths C."/>
            <person name="Griffiths-Jones S."/>
            <person name="Grocock R."/>
            <person name="Guy J."/>
            <person name="Hall R.E."/>
            <person name="Hammond S."/>
            <person name="Harley J.L."/>
            <person name="Harrison E.S.I."/>
            <person name="Hart E.A."/>
            <person name="Heath P.D."/>
            <person name="Henderson C.D."/>
            <person name="Hopkins B.L."/>
            <person name="Howard P.J."/>
            <person name="Howden P.J."/>
            <person name="Huckle E."/>
            <person name="Johnson C."/>
            <person name="Johnson D."/>
            <person name="Joy A.A."/>
            <person name="Kay M."/>
            <person name="Keenan S."/>
            <person name="Kershaw J.K."/>
            <person name="Kimberley A.M."/>
            <person name="King A."/>
            <person name="Knights A."/>
            <person name="Laird G.K."/>
            <person name="Langford C."/>
            <person name="Lawlor S."/>
            <person name="Leongamornlert D.A."/>
            <person name="Leversha M."/>
            <person name="Lloyd C."/>
            <person name="Lloyd D.M."/>
            <person name="Lovell J."/>
            <person name="Martin S."/>
            <person name="Mashreghi-Mohammadi M."/>
            <person name="Matthews L."/>
            <person name="McLaren S."/>
            <person name="McLay K.E."/>
            <person name="McMurray A."/>
            <person name="Milne S."/>
            <person name="Nickerson T."/>
            <person name="Nisbett J."/>
            <person name="Nordsiek G."/>
            <person name="Pearce A.V."/>
            <person name="Peck A.I."/>
            <person name="Porter K.M."/>
            <person name="Pandian R."/>
            <person name="Pelan S."/>
            <person name="Phillimore B."/>
            <person name="Povey S."/>
            <person name="Ramsey Y."/>
            <person name="Rand V."/>
            <person name="Scharfe M."/>
            <person name="Sehra H.K."/>
            <person name="Shownkeen R."/>
            <person name="Sims S.K."/>
            <person name="Skuce C.D."/>
            <person name="Smith M."/>
            <person name="Steward C.A."/>
            <person name="Swarbreck D."/>
            <person name="Sycamore N."/>
            <person name="Tester J."/>
            <person name="Thorpe A."/>
            <person name="Tracey A."/>
            <person name="Tromans A."/>
            <person name="Thomas D.W."/>
            <person name="Wall M."/>
            <person name="Wallis J.M."/>
            <person name="West A.P."/>
            <person name="Whitehead S.L."/>
            <person name="Willey D.L."/>
            <person name="Williams S.A."/>
            <person name="Wilming L."/>
            <person name="Wray P.W."/>
            <person name="Young L."/>
            <person name="Ashurst J.L."/>
            <person name="Coulson A."/>
            <person name="Blocker H."/>
            <person name="Durbin R.M."/>
            <person name="Sulston J.E."/>
            <person name="Hubbard T."/>
            <person name="Jackson M.J."/>
            <person name="Bentley D.R."/>
            <person name="Beck S."/>
            <person name="Rogers J."/>
            <person name="Dunham I."/>
        </authorList>
    </citation>
    <scope>NUCLEOTIDE SEQUENCE [LARGE SCALE GENOMIC DNA]</scope>
</reference>
<reference key="6">
    <citation type="journal article" date="2004" name="Genome Res.">
        <title>The status, quality, and expansion of the NIH full-length cDNA project: the Mammalian Gene Collection (MGC).</title>
        <authorList>
            <consortium name="The MGC Project Team"/>
        </authorList>
    </citation>
    <scope>NUCLEOTIDE SEQUENCE [LARGE SCALE MRNA]</scope>
    <source>
        <tissue>Brain</tissue>
    </source>
</reference>
<reference key="7">
    <citation type="submission" date="1999-02" db="EMBL/GenBank/DDBJ databases">
        <title>Functional prediction of the coding sequences of 75 new genes deduced by analysis of cDNA clones from human fetal liver.</title>
        <authorList>
            <person name="Zhang C."/>
            <person name="Yu Y."/>
            <person name="Zhang S."/>
            <person name="Wei H."/>
            <person name="Bi J."/>
            <person name="Zhou G."/>
            <person name="Dong C."/>
            <person name="Zai Y."/>
            <person name="Xu W."/>
            <person name="Gao F."/>
            <person name="Liu M."/>
            <person name="He F."/>
        </authorList>
    </citation>
    <scope>NUCLEOTIDE SEQUENCE [LARGE SCALE MRNA] OF 5-484</scope>
    <source>
        <tissue>Fetal liver</tissue>
    </source>
</reference>
<reference key="8">
    <citation type="submission" date="1998-12" db="EMBL/GenBank/DDBJ databases">
        <title>Functional prediction of the coding sequences of 121 new genes deduced by analysis of cDNA clones from human fetal liver.</title>
        <authorList>
            <person name="Zhang C."/>
            <person name="Yu Y."/>
            <person name="Zhang S."/>
            <person name="Wei H."/>
            <person name="Zhou G."/>
            <person name="Ouyang S."/>
            <person name="Luo L."/>
            <person name="Bi J."/>
            <person name="Liu M."/>
            <person name="He F."/>
        </authorList>
    </citation>
    <scope>NUCLEOTIDE SEQUENCE [LARGE SCALE MRNA] OF 115-484</scope>
    <source>
        <tissue>Fetal liver</tissue>
    </source>
</reference>
<reference key="9">
    <citation type="journal article" date="2005" name="Leukemia">
        <title>High expression of EDAG and its significance in AML.</title>
        <authorList>
            <person name="An L.-L."/>
            <person name="Li G."/>
            <person name="Wu K.-F."/>
            <person name="Ma X.-T."/>
            <person name="Zheng G.-G."/>
            <person name="Qiu L.-G."/>
            <person name="Song Y.-H."/>
        </authorList>
    </citation>
    <scope>FUNCTION</scope>
    <scope>TISSUE SPECIFICITY</scope>
</reference>
<reference key="10">
    <citation type="journal article" date="2011" name="BMC Syst. Biol.">
        <title>Initial characterization of the human central proteome.</title>
        <authorList>
            <person name="Burkard T.R."/>
            <person name="Planyavsky M."/>
            <person name="Kaupe I."/>
            <person name="Breitwieser F.P."/>
            <person name="Buerckstuemmer T."/>
            <person name="Bennett K.L."/>
            <person name="Superti-Furga G."/>
            <person name="Colinge J."/>
        </authorList>
    </citation>
    <scope>IDENTIFICATION BY MASS SPECTROMETRY [LARGE SCALE ANALYSIS]</scope>
</reference>
<reference key="11">
    <citation type="journal article" date="2013" name="J. Proteome Res.">
        <title>Toward a comprehensive characterization of a human cancer cell phosphoproteome.</title>
        <authorList>
            <person name="Zhou H."/>
            <person name="Di Palma S."/>
            <person name="Preisinger C."/>
            <person name="Peng M."/>
            <person name="Polat A.N."/>
            <person name="Heck A.J."/>
            <person name="Mohammed S."/>
        </authorList>
    </citation>
    <scope>PHOSPHORYLATION [LARGE SCALE ANALYSIS] AT SER-123; SER-181; SER-188; SER-201; SER-349; SER-353; THR-360 AND SER-363</scope>
    <scope>IDENTIFICATION BY MASS SPECTROMETRY [LARGE SCALE ANALYSIS]</scope>
    <source>
        <tissue>Erythroleukemia</tissue>
    </source>
</reference>
<reference key="12">
    <citation type="journal article" date="2013" name="Proteomics">
        <title>Scanning of novel cancer/testis proteins by human testis proteomic analysis.</title>
        <authorList>
            <person name="Liu M."/>
            <person name="Hu Z."/>
            <person name="Qi L."/>
            <person name="Wang J."/>
            <person name="Zhou T."/>
            <person name="Guo Y."/>
            <person name="Zeng Y."/>
            <person name="Zheng B."/>
            <person name="Wu Y."/>
            <person name="Zhang P."/>
            <person name="Chen X."/>
            <person name="Tu W."/>
            <person name="Zhang T."/>
            <person name="Zhou Q."/>
            <person name="Jiang M."/>
            <person name="Guo X."/>
            <person name="Zhou Z."/>
            <person name="Sha J."/>
        </authorList>
    </citation>
    <scope>TISSUE SPECIFICITY</scope>
</reference>
<evidence type="ECO:0000250" key="1">
    <source>
        <dbReference type="UniProtKB" id="Q6AZ54"/>
    </source>
</evidence>
<evidence type="ECO:0000250" key="2">
    <source>
        <dbReference type="UniProtKB" id="Q9ERZ0"/>
    </source>
</evidence>
<evidence type="ECO:0000256" key="3">
    <source>
        <dbReference type="SAM" id="MobiDB-lite"/>
    </source>
</evidence>
<evidence type="ECO:0000269" key="4">
    <source>
    </source>
</evidence>
<evidence type="ECO:0000269" key="5">
    <source>
    </source>
</evidence>
<evidence type="ECO:0000269" key="6">
    <source>
    </source>
</evidence>
<evidence type="ECO:0000269" key="7">
    <source>
    </source>
</evidence>
<evidence type="ECO:0000269" key="8">
    <source>
    </source>
</evidence>
<evidence type="ECO:0000269" key="9">
    <source>
    </source>
</evidence>
<evidence type="ECO:0000305" key="10"/>
<evidence type="ECO:0007744" key="11">
    <source>
    </source>
</evidence>
<sequence>MDLGKDQSHLKHHQTPDPHQEENHSPEVIGTWSLRNRELLRKRKAEVHEKETSQWLFGEQKKRKQQRTGKGNRRGRKRQQNTELKVEPQPQIEKEIVEKALAPIEKKTEPPGSITKVFPSVASPQKVVPEEHFSEICQESNIYQENFSEYQEIAVQNHSSETCQHVSEPEDLSPKMYQEISVLQDNSSKICQDMKEPEDNSPNTCQVISVIQDHPFKMYQDMAKREDLAPKMCQEAAVPKILPCPTSEDTADLAGCSLQAYPKPDVPKGYILDTDQNPAEPEEYNETDQGIAETEGLFPKIQEIAEPKDLSTKTHQESAEPKYLPHKTCNEIIVPKAPSHKTIQETPHSEDYSIEINQETPGSEKYSPETYQEIPGLEEYSPEIYQETSQLEEYSPEIYQETPGPEDLSTETYKNKDVPKECFPEPHQETGGPQGQDPKAHQEDAKDAYTFPQEMKEKPKEEPGIPAILNESHPENDVYSYVLF</sequence>
<accession>Q9BXL5</accession>
<accession>Q6XAR3</accession>
<accession>Q86XY5</accession>
<accession>Q9NPC0</accession>
<proteinExistence type="evidence at protein level"/>
<name>HEMGN_HUMAN</name>